<feature type="chain" id="PRO_0000168215" description="Dihydropteroate synthase">
    <location>
        <begin position="1"/>
        <end position="280"/>
    </location>
</feature>
<feature type="domain" description="Pterin-binding" evidence="1">
    <location>
        <begin position="1"/>
        <end position="265"/>
    </location>
</feature>
<feature type="binding site" evidence="3">
    <location>
        <position position="13"/>
    </location>
    <ligand>
        <name>Mg(2+)</name>
        <dbReference type="ChEBI" id="CHEBI:18420"/>
    </ligand>
</feature>
<feature type="binding site" evidence="9 10">
    <location>
        <position position="21"/>
    </location>
    <ligand>
        <name>(7,8-dihydropterin-6-yl)methyl diphosphate</name>
        <dbReference type="ChEBI" id="CHEBI:72950"/>
    </ligand>
</feature>
<feature type="binding site" evidence="9 10">
    <location>
        <position position="86"/>
    </location>
    <ligand>
        <name>(7,8-dihydropterin-6-yl)methyl diphosphate</name>
        <dbReference type="ChEBI" id="CHEBI:72950"/>
    </ligand>
</feature>
<feature type="binding site" evidence="9 10">
    <location>
        <position position="105"/>
    </location>
    <ligand>
        <name>(7,8-dihydropterin-6-yl)methyl diphosphate</name>
        <dbReference type="ChEBI" id="CHEBI:72950"/>
    </ligand>
</feature>
<feature type="binding site" evidence="9 10">
    <location>
        <position position="177"/>
    </location>
    <ligand>
        <name>(7,8-dihydropterin-6-yl)methyl diphosphate</name>
        <dbReference type="ChEBI" id="CHEBI:72950"/>
    </ligand>
</feature>
<feature type="binding site" evidence="9 10">
    <location>
        <position position="213"/>
    </location>
    <ligand>
        <name>(7,8-dihydropterin-6-yl)methyl diphosphate</name>
        <dbReference type="ChEBI" id="CHEBI:72950"/>
    </ligand>
</feature>
<feature type="binding site" evidence="9 10">
    <location>
        <begin position="253"/>
        <end position="255"/>
    </location>
    <ligand>
        <name>(7,8-dihydropterin-6-yl)methyl diphosphate</name>
        <dbReference type="ChEBI" id="CHEBI:72950"/>
    </ligand>
</feature>
<feature type="strand" evidence="11">
    <location>
        <begin position="7"/>
        <end position="13"/>
    </location>
</feature>
<feature type="helix" evidence="11">
    <location>
        <begin position="28"/>
        <end position="40"/>
    </location>
</feature>
<feature type="strand" evidence="11">
    <location>
        <begin position="44"/>
        <end position="49"/>
    </location>
</feature>
<feature type="helix" evidence="11">
    <location>
        <begin position="66"/>
        <end position="78"/>
    </location>
</feature>
<feature type="strand" evidence="11">
    <location>
        <begin position="83"/>
        <end position="86"/>
    </location>
</feature>
<feature type="helix" evidence="11">
    <location>
        <begin position="90"/>
        <end position="98"/>
    </location>
</feature>
<feature type="strand" evidence="11">
    <location>
        <begin position="103"/>
        <end position="106"/>
    </location>
</feature>
<feature type="turn" evidence="11">
    <location>
        <begin position="107"/>
        <end position="110"/>
    </location>
</feature>
<feature type="helix" evidence="11">
    <location>
        <begin position="116"/>
        <end position="123"/>
    </location>
</feature>
<feature type="strand" evidence="11">
    <location>
        <begin position="127"/>
        <end position="130"/>
    </location>
</feature>
<feature type="helix" evidence="11">
    <location>
        <begin position="149"/>
        <end position="166"/>
    </location>
</feature>
<feature type="helix" evidence="11">
    <location>
        <begin position="171"/>
        <end position="173"/>
    </location>
</feature>
<feature type="strand" evidence="11">
    <location>
        <begin position="174"/>
        <end position="177"/>
    </location>
</feature>
<feature type="helix" evidence="11">
    <location>
        <begin position="186"/>
        <end position="194"/>
    </location>
</feature>
<feature type="helix" evidence="11">
    <location>
        <begin position="196"/>
        <end position="200"/>
    </location>
</feature>
<feature type="strand" evidence="11">
    <location>
        <begin position="206"/>
        <end position="208"/>
    </location>
</feature>
<feature type="helix" evidence="11">
    <location>
        <begin position="214"/>
        <end position="219"/>
    </location>
</feature>
<feature type="strand" evidence="11">
    <location>
        <begin position="223"/>
        <end position="225"/>
    </location>
</feature>
<feature type="helix" evidence="11">
    <location>
        <begin position="230"/>
        <end position="233"/>
    </location>
</feature>
<feature type="helix" evidence="11">
    <location>
        <begin position="234"/>
        <end position="246"/>
    </location>
</feature>
<feature type="strand" evidence="11">
    <location>
        <begin position="250"/>
        <end position="255"/>
    </location>
</feature>
<feature type="helix" evidence="11">
    <location>
        <begin position="257"/>
        <end position="271"/>
    </location>
</feature>
<keyword id="KW-0002">3D-structure</keyword>
<keyword id="KW-0289">Folate biosynthesis</keyword>
<keyword id="KW-0460">Magnesium</keyword>
<keyword id="KW-0479">Metal-binding</keyword>
<keyword id="KW-1185">Reference proteome</keyword>
<keyword id="KW-0808">Transferase</keyword>
<comment type="function">
    <text evidence="2 4 5">Catalyzes the condensation of para-aminobenzoate (pABA) with 6-hydroxymethyl-7,8-dihydropterin diphosphate (DHPt-PP) to form 7,8-dihydropteroate (H2Pte), the immediate precursor of folate derivatives.</text>
</comment>
<comment type="function">
    <text evidence="4 5">Is involved in the bioactivation of the antituberculous drug para-aminosalicylic acid (PAS). PAS is a close structural analog of pABA and acts as an alternative substrate for DHPS, leading to hydroxy-dihydropteroate (H2PtePAS). Metabolomic studies show that PAS, despite its in vitro activity as a competitive inhibitor of DHPS, does not inhibit growth of M.tuberculosis by inhibiting DHPS. PAS exerts its antimycobacterial activity through its effects on M.tuberculosis folate metabolism downstream of DHPS. PAS poisons folate-dependent pathways not only by serving as a replacement substrate for DHPS but also by the products of that reaction serving as replacement substrates and/or inhibitors of subsequent enzymes.</text>
</comment>
<comment type="catalytic activity">
    <reaction evidence="2 4 5">
        <text>(7,8-dihydropterin-6-yl)methyl diphosphate + 4-aminobenzoate = 7,8-dihydropteroate + diphosphate</text>
        <dbReference type="Rhea" id="RHEA:19949"/>
        <dbReference type="ChEBI" id="CHEBI:17836"/>
        <dbReference type="ChEBI" id="CHEBI:17839"/>
        <dbReference type="ChEBI" id="CHEBI:33019"/>
        <dbReference type="ChEBI" id="CHEBI:72950"/>
        <dbReference type="EC" id="2.5.1.15"/>
    </reaction>
</comment>
<comment type="catalytic activity">
    <reaction evidence="4">
        <text>4-aminosalicylate + (7,8-dihydropterin-6-yl)methyl diphosphate = 2-hydroxy-7,8-dihydropteroate + diphosphate</text>
        <dbReference type="Rhea" id="RHEA:53732"/>
        <dbReference type="ChEBI" id="CHEBI:33019"/>
        <dbReference type="ChEBI" id="CHEBI:72950"/>
        <dbReference type="ChEBI" id="CHEBI:137598"/>
        <dbReference type="ChEBI" id="CHEBI:137600"/>
    </reaction>
</comment>
<comment type="cofactor">
    <cofactor evidence="9">
        <name>Mg(2+)</name>
        <dbReference type="ChEBI" id="CHEBI:18420"/>
    </cofactor>
    <text evidence="7">Magnesium is required for activity, even if it seems to interact primarily with the substrate.</text>
</comment>
<comment type="activity regulation">
    <text evidence="2 5">Is potently inhibited by the sulfone dapsone and the two sulfonamides sulfamethoxazole and sulfamethoxypyridazine, with Kis in the range of 12 to 32 nM. Is only poorly inhibited by p-aminosalicylate (PAS) (PubMed:10542185). The inhibition of DHPS by sulfathiazole antagonizes PAS-mediated growth inhibition and therefore confers resistance to PAS (PubMed:23779105).</text>
</comment>
<comment type="biophysicochemical properties">
    <kinetics>
        <KM evidence="2">0.37 uM for 4-aminobenzoate</KM>
        <KM evidence="2">1.03 uM for 6-hydroxymethyl-7,8-dihydropterin diphosphate</KM>
        <KM evidence="4">0.6 uM for 4-aminobenzoate</KM>
        <KM evidence="4">1.8 uM for para-aminosalicylate</KM>
        <KM evidence="5">11.4 uM for 4-aminobenzoate</KM>
        <KM evidence="5">17.7 uM for para-aminosalicylate</KM>
        <text evidence="2 4">kcat is 35 min(-1) (PubMed:10542185). kcat is 28 min(-1) with pABA as substrate, and 45 min(-1) with PAS as substrate (PubMed:23118010).</text>
    </kinetics>
    <phDependence>
        <text evidence="2">Optimum pH is 8.</text>
    </phDependence>
</comment>
<comment type="pathway">
    <text evidence="8">Cofactor biosynthesis; tetrahydrofolate biosynthesis; 7,8-dihydrofolate from 2-amino-4-hydroxy-6-hydroxymethyl-7,8-dihydropteridine diphosphate and 4-aminobenzoate: step 1/2.</text>
</comment>
<comment type="subunit">
    <text evidence="2">Homodimer.</text>
</comment>
<comment type="similarity">
    <text evidence="7">Belongs to the DHPS family.</text>
</comment>
<proteinExistence type="evidence at protein level"/>
<dbReference type="EC" id="2.5.1.15" evidence="2 4 5"/>
<dbReference type="EMBL" id="AF117617">
    <property type="protein sequence ID" value="AAF06724.1"/>
    <property type="molecule type" value="Genomic_DNA"/>
</dbReference>
<dbReference type="EMBL" id="AL123456">
    <property type="protein sequence ID" value="CCP46431.1"/>
    <property type="molecule type" value="Genomic_DNA"/>
</dbReference>
<dbReference type="PIR" id="A70956">
    <property type="entry name" value="A70956"/>
</dbReference>
<dbReference type="RefSeq" id="YP_177997.1">
    <property type="nucleotide sequence ID" value="NC_000962.3"/>
</dbReference>
<dbReference type="PDB" id="1EYE">
    <property type="method" value="X-ray"/>
    <property type="resolution" value="1.70 A"/>
    <property type="chains" value="A=1-280"/>
</dbReference>
<dbReference type="PDBsum" id="1EYE"/>
<dbReference type="SMR" id="P9WND1"/>
<dbReference type="FunCoup" id="P9WND1">
    <property type="interactions" value="238"/>
</dbReference>
<dbReference type="STRING" id="83332.Rv3608c"/>
<dbReference type="DrugBank" id="DB03592">
    <property type="generic name" value="Pterin-6-Yl-Methyl-Monophosphate"/>
</dbReference>
<dbReference type="PaxDb" id="83332-Rv3608c"/>
<dbReference type="DNASU" id="885831"/>
<dbReference type="GeneID" id="885831"/>
<dbReference type="KEGG" id="mtu:Rv3608c"/>
<dbReference type="KEGG" id="mtv:RVBD_3608c"/>
<dbReference type="TubercuList" id="Rv3608c"/>
<dbReference type="eggNOG" id="COG0294">
    <property type="taxonomic scope" value="Bacteria"/>
</dbReference>
<dbReference type="InParanoid" id="P9WND1"/>
<dbReference type="OrthoDB" id="9811744at2"/>
<dbReference type="PhylomeDB" id="P9WND1"/>
<dbReference type="BRENDA" id="2.5.1.15">
    <property type="organism ID" value="3445"/>
</dbReference>
<dbReference type="SABIO-RK" id="P9WND1"/>
<dbReference type="UniPathway" id="UPA00077">
    <property type="reaction ID" value="UER00156"/>
</dbReference>
<dbReference type="EvolutionaryTrace" id="P9WND1"/>
<dbReference type="Proteomes" id="UP000001584">
    <property type="component" value="Chromosome"/>
</dbReference>
<dbReference type="GO" id="GO:0005829">
    <property type="term" value="C:cytosol"/>
    <property type="evidence" value="ECO:0000318"/>
    <property type="project" value="GO_Central"/>
</dbReference>
<dbReference type="GO" id="GO:0004156">
    <property type="term" value="F:dihydropteroate synthase activity"/>
    <property type="evidence" value="ECO:0000314"/>
    <property type="project" value="MTBBASE"/>
</dbReference>
<dbReference type="GO" id="GO:0046872">
    <property type="term" value="F:metal ion binding"/>
    <property type="evidence" value="ECO:0007669"/>
    <property type="project" value="UniProtKB-KW"/>
</dbReference>
<dbReference type="GO" id="GO:0046656">
    <property type="term" value="P:folic acid biosynthetic process"/>
    <property type="evidence" value="ECO:0007669"/>
    <property type="project" value="UniProtKB-KW"/>
</dbReference>
<dbReference type="GO" id="GO:0046654">
    <property type="term" value="P:tetrahydrofolate biosynthetic process"/>
    <property type="evidence" value="ECO:0000314"/>
    <property type="project" value="MTBBASE"/>
</dbReference>
<dbReference type="CDD" id="cd00739">
    <property type="entry name" value="DHPS"/>
    <property type="match status" value="1"/>
</dbReference>
<dbReference type="FunFam" id="3.20.20.20:FF:000006">
    <property type="entry name" value="Dihydropteroate synthase"/>
    <property type="match status" value="1"/>
</dbReference>
<dbReference type="Gene3D" id="3.20.20.20">
    <property type="entry name" value="Dihydropteroate synthase-like"/>
    <property type="match status" value="1"/>
</dbReference>
<dbReference type="InterPro" id="IPR045031">
    <property type="entry name" value="DHP_synth-like"/>
</dbReference>
<dbReference type="InterPro" id="IPR006390">
    <property type="entry name" value="DHP_synth_dom"/>
</dbReference>
<dbReference type="InterPro" id="IPR011005">
    <property type="entry name" value="Dihydropteroate_synth-like_sf"/>
</dbReference>
<dbReference type="InterPro" id="IPR000489">
    <property type="entry name" value="Pterin-binding_dom"/>
</dbReference>
<dbReference type="NCBIfam" id="TIGR01496">
    <property type="entry name" value="DHPS"/>
    <property type="match status" value="1"/>
</dbReference>
<dbReference type="PANTHER" id="PTHR20941">
    <property type="entry name" value="FOLATE SYNTHESIS PROTEINS"/>
    <property type="match status" value="1"/>
</dbReference>
<dbReference type="PANTHER" id="PTHR20941:SF1">
    <property type="entry name" value="FOLIC ACID SYNTHESIS PROTEIN FOL1"/>
    <property type="match status" value="1"/>
</dbReference>
<dbReference type="Pfam" id="PF00809">
    <property type="entry name" value="Pterin_bind"/>
    <property type="match status" value="1"/>
</dbReference>
<dbReference type="SUPFAM" id="SSF51717">
    <property type="entry name" value="Dihydropteroate synthetase-like"/>
    <property type="match status" value="1"/>
</dbReference>
<dbReference type="PROSITE" id="PS00792">
    <property type="entry name" value="DHPS_1"/>
    <property type="match status" value="1"/>
</dbReference>
<dbReference type="PROSITE" id="PS00793">
    <property type="entry name" value="DHPS_2"/>
    <property type="match status" value="1"/>
</dbReference>
<dbReference type="PROSITE" id="PS50972">
    <property type="entry name" value="PTERIN_BINDING"/>
    <property type="match status" value="1"/>
</dbReference>
<protein>
    <recommendedName>
        <fullName evidence="6">Dihydropteroate synthase</fullName>
        <shortName evidence="6">DHPS</shortName>
        <ecNumber evidence="2 4 5">2.5.1.15</ecNumber>
    </recommendedName>
    <alternativeName>
        <fullName>Dihydropteroate pyrophosphorylase</fullName>
    </alternativeName>
</protein>
<accession>P9WND1</accession>
<accession>L0TG01</accession>
<accession>O06274</accession>
<accession>P0A578</accession>
<gene>
    <name type="primary">folP1</name>
    <name type="ordered locus">Rv3608c</name>
    <name type="ORF">MTCY07H7B.14</name>
</gene>
<sequence>MSPAPVQVMGVLNVTDDSFSDGGCYLDLDDAVKHGLAMAAAGAGIVDVGGESSRPGATRVDPAVETSRVIPVVKELAAQGITVSIDTMRADVARAALQNGAQMVNDVSGGRADPAMGPLLAEADVPWVLMHWRAVSADTPHVPVRYGNVVAEVRADLLASVADAVAAGVDPARLVLDPGLGFAKTAQHNWAILHALPELVATGIPVLVGASRKRFLGALLAGPDGVMRPTDGRDTATAVISALAALHGAWGVRVHDVRASVDAIKVVEAWMGAERIERDG</sequence>
<evidence type="ECO:0000255" key="1">
    <source>
        <dbReference type="PROSITE-ProRule" id="PRU00334"/>
    </source>
</evidence>
<evidence type="ECO:0000269" key="2">
    <source>
    </source>
</evidence>
<evidence type="ECO:0000269" key="3">
    <source>
    </source>
</evidence>
<evidence type="ECO:0000269" key="4">
    <source>
    </source>
</evidence>
<evidence type="ECO:0000269" key="5">
    <source>
    </source>
</evidence>
<evidence type="ECO:0000303" key="6">
    <source>
    </source>
</evidence>
<evidence type="ECO:0000305" key="7"/>
<evidence type="ECO:0000305" key="8">
    <source>
    </source>
</evidence>
<evidence type="ECO:0000305" key="9">
    <source>
    </source>
</evidence>
<evidence type="ECO:0007744" key="10">
    <source>
        <dbReference type="PDB" id="1EYE"/>
    </source>
</evidence>
<evidence type="ECO:0007829" key="11">
    <source>
        <dbReference type="PDB" id="1EYE"/>
    </source>
</evidence>
<name>DHPS1_MYCTU</name>
<organism>
    <name type="scientific">Mycobacterium tuberculosis (strain ATCC 25618 / H37Rv)</name>
    <dbReference type="NCBI Taxonomy" id="83332"/>
    <lineage>
        <taxon>Bacteria</taxon>
        <taxon>Bacillati</taxon>
        <taxon>Actinomycetota</taxon>
        <taxon>Actinomycetes</taxon>
        <taxon>Mycobacteriales</taxon>
        <taxon>Mycobacteriaceae</taxon>
        <taxon>Mycobacterium</taxon>
        <taxon>Mycobacterium tuberculosis complex</taxon>
    </lineage>
</organism>
<reference key="1">
    <citation type="journal article" date="1999" name="J. Bacteriol.">
        <title>Cloning and expression of Mycobacterium tuberculosis and Mycobacterium leprae dihydropteroate synthase in Escherichia coli.</title>
        <authorList>
            <person name="Nopponpunth V."/>
            <person name="Sirawaraporn W."/>
            <person name="Greene P.J."/>
            <person name="Santi D.V."/>
        </authorList>
    </citation>
    <scope>NUCLEOTIDE SEQUENCE [GENOMIC DNA]</scope>
    <scope>FUNCTION</scope>
    <scope>CATALYTIC ACTIVITY</scope>
    <scope>BIOPHYSICOCHEMICAL PROPERTIES</scope>
    <scope>ACTIVITY REGULATION</scope>
    <scope>SUBUNIT</scope>
    <source>
        <strain>H37Rv</strain>
    </source>
</reference>
<reference key="2">
    <citation type="journal article" date="1998" name="Nature">
        <title>Deciphering the biology of Mycobacterium tuberculosis from the complete genome sequence.</title>
        <authorList>
            <person name="Cole S.T."/>
            <person name="Brosch R."/>
            <person name="Parkhill J."/>
            <person name="Garnier T."/>
            <person name="Churcher C.M."/>
            <person name="Harris D.E."/>
            <person name="Gordon S.V."/>
            <person name="Eiglmeier K."/>
            <person name="Gas S."/>
            <person name="Barry C.E. III"/>
            <person name="Tekaia F."/>
            <person name="Badcock K."/>
            <person name="Basham D."/>
            <person name="Brown D."/>
            <person name="Chillingworth T."/>
            <person name="Connor R."/>
            <person name="Davies R.M."/>
            <person name="Devlin K."/>
            <person name="Feltwell T."/>
            <person name="Gentles S."/>
            <person name="Hamlin N."/>
            <person name="Holroyd S."/>
            <person name="Hornsby T."/>
            <person name="Jagels K."/>
            <person name="Krogh A."/>
            <person name="McLean J."/>
            <person name="Moule S."/>
            <person name="Murphy L.D."/>
            <person name="Oliver S."/>
            <person name="Osborne J."/>
            <person name="Quail M.A."/>
            <person name="Rajandream M.A."/>
            <person name="Rogers J."/>
            <person name="Rutter S."/>
            <person name="Seeger K."/>
            <person name="Skelton S."/>
            <person name="Squares S."/>
            <person name="Squares R."/>
            <person name="Sulston J.E."/>
            <person name="Taylor K."/>
            <person name="Whitehead S."/>
            <person name="Barrell B.G."/>
        </authorList>
    </citation>
    <scope>NUCLEOTIDE SEQUENCE [LARGE SCALE GENOMIC DNA]</scope>
    <source>
        <strain>ATCC 25618 / H37Rv</strain>
    </source>
</reference>
<reference key="3">
    <citation type="journal article" date="2011" name="Mol. Cell. Proteomics">
        <title>Proteogenomic analysis of Mycobacterium tuberculosis by high resolution mass spectrometry.</title>
        <authorList>
            <person name="Kelkar D.S."/>
            <person name="Kumar D."/>
            <person name="Kumar P."/>
            <person name="Balakrishnan L."/>
            <person name="Muthusamy B."/>
            <person name="Yadav A.K."/>
            <person name="Shrivastava P."/>
            <person name="Marimuthu A."/>
            <person name="Anand S."/>
            <person name="Sundaram H."/>
            <person name="Kingsbury R."/>
            <person name="Harsha H.C."/>
            <person name="Nair B."/>
            <person name="Prasad T.S."/>
            <person name="Chauhan D.S."/>
            <person name="Katoch K."/>
            <person name="Katoch V.M."/>
            <person name="Kumar P."/>
            <person name="Chaerkady R."/>
            <person name="Ramachandran S."/>
            <person name="Dash D."/>
            <person name="Pandey A."/>
        </authorList>
    </citation>
    <scope>IDENTIFICATION BY MASS SPECTROMETRY [LARGE SCALE ANALYSIS]</scope>
    <source>
        <strain>ATCC 25618 / H37Rv</strain>
    </source>
</reference>
<reference key="4">
    <citation type="journal article" date="2013" name="J. Biol. Chem.">
        <title>para-Aminosalicylic acid is a prodrug targeting dihydrofolate reductase in Mycobacterium tuberculosis.</title>
        <authorList>
            <person name="Zheng J."/>
            <person name="Rubin E.J."/>
            <person name="Bifani P."/>
            <person name="Mathys V."/>
            <person name="Lim V."/>
            <person name="Au M."/>
            <person name="Jang J."/>
            <person name="Nam J."/>
            <person name="Dick T."/>
            <person name="Walker J.R."/>
            <person name="Pethe K."/>
            <person name="Camacho L.R."/>
        </authorList>
    </citation>
    <scope>FUNCTION</scope>
    <scope>CATALYTIC ACTIVITY</scope>
    <scope>BIOPHYSICOCHEMICAL PROPERTIES</scope>
    <scope>ACTIVITY REGULATION</scope>
    <source>
        <strain>H37Rv</strain>
    </source>
</reference>
<reference key="5">
    <citation type="journal article" date="2013" name="Science">
        <title>Para-aminosalicylic acid acts as an alternative substrate of folate metabolism in Mycobacterium tuberculosis.</title>
        <authorList>
            <person name="Chakraborty S."/>
            <person name="Gruber T."/>
            <person name="Barry C.E. III"/>
            <person name="Boshoff H.I."/>
            <person name="Rhee K.Y."/>
        </authorList>
    </citation>
    <scope>FUNCTION</scope>
    <scope>CATALYTIC ACTIVITY</scope>
    <scope>BIOPHYSICOCHEMICAL PROPERTIES</scope>
    <source>
        <strain>H37Rv</strain>
    </source>
</reference>
<reference key="6">
    <citation type="journal article" date="2000" name="J. Mol. Biol.">
        <title>Crystal structure of Mycobacterium tuberculosis 7,8-dihydropteroate synthase in complex with pterin monophosphate: new insight into the enzymatic mechanism and sulfa-drug action.</title>
        <authorList>
            <person name="Baca A.M."/>
            <person name="Sirawaraporn R."/>
            <person name="Turley S."/>
            <person name="Sirawaraporn W."/>
            <person name="Hol W.G.J."/>
        </authorList>
    </citation>
    <scope>X-RAY CRYSTALLOGRAPHY (1.7 ANGSTROMS) IN COMPLEX WITH MAGNESIUM IONS AND PTERIN MONOPHOSPHATE</scope>
    <scope>COFACTOR</scope>
</reference>
<reference key="7">
    <citation type="journal article" date="2000" name="J. Mol. Biol.">
        <authorList>
            <person name="Baca A.M."/>
            <person name="Sirawaraporn R."/>
            <person name="Turley S."/>
            <person name="Sirawaraporn W."/>
            <person name="Hol W.G.J."/>
        </authorList>
    </citation>
    <scope>ERRATUM OF PUBMED:11007651</scope>
</reference>